<protein>
    <recommendedName>
        <fullName evidence="1">Zinc transport protein ZntB</fullName>
    </recommendedName>
</protein>
<gene>
    <name evidence="1" type="primary">zntB</name>
    <name type="ordered locus">YpsIP31758_1799</name>
</gene>
<proteinExistence type="inferred from homology"/>
<accession>A7FHP6</accession>
<comment type="function">
    <text evidence="1">Zinc transporter. Acts as a Zn(2+):proton symporter, which likely mediates zinc ion uptake.</text>
</comment>
<comment type="catalytic activity">
    <reaction evidence="1">
        <text>Zn(2+)(out) + H(+)(out) = Zn(2+)(in) + H(+)(in)</text>
        <dbReference type="Rhea" id="RHEA:71195"/>
        <dbReference type="ChEBI" id="CHEBI:15378"/>
        <dbReference type="ChEBI" id="CHEBI:29105"/>
    </reaction>
    <physiologicalReaction direction="left-to-right" evidence="1">
        <dbReference type="Rhea" id="RHEA:71196"/>
    </physiologicalReaction>
</comment>
<comment type="subcellular location">
    <subcellularLocation>
        <location evidence="1">Cell inner membrane</location>
        <topology evidence="1">Multi-pass membrane protein</topology>
    </subcellularLocation>
</comment>
<comment type="similarity">
    <text evidence="1">Belongs to the CorA metal ion transporter (MIT) (TC 1.A.35) family.</text>
</comment>
<name>ZNTB_YERP3</name>
<reference key="1">
    <citation type="journal article" date="2007" name="PLoS Genet.">
        <title>The complete genome sequence of Yersinia pseudotuberculosis IP31758, the causative agent of Far East scarlet-like fever.</title>
        <authorList>
            <person name="Eppinger M."/>
            <person name="Rosovitz M.J."/>
            <person name="Fricke W.F."/>
            <person name="Rasko D.A."/>
            <person name="Kokorina G."/>
            <person name="Fayolle C."/>
            <person name="Lindler L.E."/>
            <person name="Carniel E."/>
            <person name="Ravel J."/>
        </authorList>
    </citation>
    <scope>NUCLEOTIDE SEQUENCE [LARGE SCALE GENOMIC DNA]</scope>
    <source>
        <strain>IP 31758</strain>
    </source>
</reference>
<keyword id="KW-0997">Cell inner membrane</keyword>
<keyword id="KW-1003">Cell membrane</keyword>
<keyword id="KW-0406">Ion transport</keyword>
<keyword id="KW-0472">Membrane</keyword>
<keyword id="KW-0812">Transmembrane</keyword>
<keyword id="KW-1133">Transmembrane helix</keyword>
<keyword id="KW-0813">Transport</keyword>
<keyword id="KW-0862">Zinc</keyword>
<organism>
    <name type="scientific">Yersinia pseudotuberculosis serotype O:1b (strain IP 31758)</name>
    <dbReference type="NCBI Taxonomy" id="349747"/>
    <lineage>
        <taxon>Bacteria</taxon>
        <taxon>Pseudomonadati</taxon>
        <taxon>Pseudomonadota</taxon>
        <taxon>Gammaproteobacteria</taxon>
        <taxon>Enterobacterales</taxon>
        <taxon>Yersiniaceae</taxon>
        <taxon>Yersinia</taxon>
    </lineage>
</organism>
<evidence type="ECO:0000255" key="1">
    <source>
        <dbReference type="HAMAP-Rule" id="MF_01565"/>
    </source>
</evidence>
<sequence>MDVVEGKALQVSDAVYAYQLDGKGGMTAISVDAVASATQPCWLHLDYTYPESAEWLQNTPLLPEVVRDGLAGESMRPKITRLGDGTMITLRGINFNNDARPDQLVTIRVYMTDKLIVSTRHRKVYSIDNVLNDLQSGTGPTGSGHWLVDIADGLTDHTSEFIEDLHDKIIDLEDDLMEQKVPPRGQMALLRKQLIVLRRYMAPQRDVFSRLASERLPWMNDDDRRRMQEISERLGRGLEDLDGSIARTAVLSDEISSLMADAMNRRTYTMSLLAMVFLPTTFLTGLFGVNLGGIPGNTDAFGFTIFCMMLVVLVLSVAWWLKRSKWL</sequence>
<dbReference type="EMBL" id="CP000720">
    <property type="protein sequence ID" value="ABS48082.1"/>
    <property type="molecule type" value="Genomic_DNA"/>
</dbReference>
<dbReference type="RefSeq" id="WP_002227906.1">
    <property type="nucleotide sequence ID" value="NC_009708.1"/>
</dbReference>
<dbReference type="SMR" id="A7FHP6"/>
<dbReference type="GeneID" id="57976336"/>
<dbReference type="KEGG" id="ypi:YpsIP31758_1799"/>
<dbReference type="HOGENOM" id="CLU_007127_2_0_6"/>
<dbReference type="Proteomes" id="UP000002412">
    <property type="component" value="Chromosome"/>
</dbReference>
<dbReference type="GO" id="GO:0005886">
    <property type="term" value="C:plasma membrane"/>
    <property type="evidence" value="ECO:0007669"/>
    <property type="project" value="UniProtKB-SubCell"/>
</dbReference>
<dbReference type="GO" id="GO:0050897">
    <property type="term" value="F:cobalt ion binding"/>
    <property type="evidence" value="ECO:0007669"/>
    <property type="project" value="TreeGrafter"/>
</dbReference>
<dbReference type="GO" id="GO:0015087">
    <property type="term" value="F:cobalt ion transmembrane transporter activity"/>
    <property type="evidence" value="ECO:0007669"/>
    <property type="project" value="TreeGrafter"/>
</dbReference>
<dbReference type="GO" id="GO:0000287">
    <property type="term" value="F:magnesium ion binding"/>
    <property type="evidence" value="ECO:0007669"/>
    <property type="project" value="TreeGrafter"/>
</dbReference>
<dbReference type="GO" id="GO:0015095">
    <property type="term" value="F:magnesium ion transmembrane transporter activity"/>
    <property type="evidence" value="ECO:0007669"/>
    <property type="project" value="TreeGrafter"/>
</dbReference>
<dbReference type="GO" id="GO:0005385">
    <property type="term" value="F:zinc ion transmembrane transporter activity"/>
    <property type="evidence" value="ECO:0007669"/>
    <property type="project" value="UniProtKB-UniRule"/>
</dbReference>
<dbReference type="CDD" id="cd12833">
    <property type="entry name" value="ZntB-like_1"/>
    <property type="match status" value="1"/>
</dbReference>
<dbReference type="Gene3D" id="3.30.460.20">
    <property type="entry name" value="CorA soluble domain-like"/>
    <property type="match status" value="1"/>
</dbReference>
<dbReference type="Gene3D" id="1.20.58.340">
    <property type="entry name" value="Magnesium transport protein CorA, transmembrane region"/>
    <property type="match status" value="2"/>
</dbReference>
<dbReference type="HAMAP" id="MF_01565">
    <property type="entry name" value="ZntB"/>
    <property type="match status" value="1"/>
</dbReference>
<dbReference type="InterPro" id="IPR045861">
    <property type="entry name" value="CorA_cytoplasmic_dom"/>
</dbReference>
<dbReference type="InterPro" id="IPR045863">
    <property type="entry name" value="CorA_TM1_TM2"/>
</dbReference>
<dbReference type="InterPro" id="IPR002523">
    <property type="entry name" value="MgTranspt_CorA/ZnTranspt_ZntB"/>
</dbReference>
<dbReference type="InterPro" id="IPR023714">
    <property type="entry name" value="Zn_transp_ZntB"/>
</dbReference>
<dbReference type="NCBIfam" id="NF007092">
    <property type="entry name" value="PRK09546.1"/>
    <property type="match status" value="1"/>
</dbReference>
<dbReference type="PANTHER" id="PTHR46494">
    <property type="entry name" value="CORA FAMILY METAL ION TRANSPORTER (EUROFUNG)"/>
    <property type="match status" value="1"/>
</dbReference>
<dbReference type="PANTHER" id="PTHR46494:SF3">
    <property type="entry name" value="ZINC TRANSPORT PROTEIN ZNTB"/>
    <property type="match status" value="1"/>
</dbReference>
<dbReference type="Pfam" id="PF01544">
    <property type="entry name" value="CorA"/>
    <property type="match status" value="1"/>
</dbReference>
<dbReference type="SUPFAM" id="SSF143865">
    <property type="entry name" value="CorA soluble domain-like"/>
    <property type="match status" value="1"/>
</dbReference>
<dbReference type="SUPFAM" id="SSF144083">
    <property type="entry name" value="Magnesium transport protein CorA, transmembrane region"/>
    <property type="match status" value="1"/>
</dbReference>
<feature type="chain" id="PRO_1000069078" description="Zinc transport protein ZntB">
    <location>
        <begin position="1"/>
        <end position="327"/>
    </location>
</feature>
<feature type="topological domain" description="Cytoplasmic" evidence="1">
    <location>
        <begin position="1"/>
        <end position="271"/>
    </location>
</feature>
<feature type="transmembrane region" description="Helical" evidence="1">
    <location>
        <begin position="272"/>
        <end position="292"/>
    </location>
</feature>
<feature type="topological domain" description="Periplasmic" evidence="1">
    <location>
        <begin position="293"/>
        <end position="300"/>
    </location>
</feature>
<feature type="transmembrane region" description="Helical" evidence="1">
    <location>
        <begin position="301"/>
        <end position="321"/>
    </location>
</feature>
<feature type="topological domain" description="Cytoplasmic" evidence="1">
    <location>
        <begin position="322"/>
        <end position="327"/>
    </location>
</feature>